<sequence length="134" mass="15445">MRHYEIVFLVHPDQSEQVPQMIERYRGMIESDGGHFHRLEDWGRRQLAYPIKKAHKAHYVLMNIECSSVALAELEDAFRFNDAVLRHLILARDEAVTSPSFLARDETDRRERSEETAEGEGEPDHSANEAVVTA</sequence>
<accession>B5EPA0</accession>
<organism>
    <name type="scientific">Acidithiobacillus ferrooxidans (strain ATCC 53993 / BNL-5-31)</name>
    <name type="common">Leptospirillum ferrooxidans (ATCC 53993)</name>
    <dbReference type="NCBI Taxonomy" id="380394"/>
    <lineage>
        <taxon>Bacteria</taxon>
        <taxon>Pseudomonadati</taxon>
        <taxon>Pseudomonadota</taxon>
        <taxon>Acidithiobacillia</taxon>
        <taxon>Acidithiobacillales</taxon>
        <taxon>Acidithiobacillaceae</taxon>
        <taxon>Acidithiobacillus</taxon>
    </lineage>
</organism>
<gene>
    <name evidence="1" type="primary">rpsF</name>
    <name type="ordered locus">Lferr_2446</name>
</gene>
<reference key="1">
    <citation type="submission" date="2008-08" db="EMBL/GenBank/DDBJ databases">
        <title>Complete sequence of Acidithiobacillus ferrooxidans ATCC 53993.</title>
        <authorList>
            <person name="Lucas S."/>
            <person name="Copeland A."/>
            <person name="Lapidus A."/>
            <person name="Glavina del Rio T."/>
            <person name="Dalin E."/>
            <person name="Tice H."/>
            <person name="Bruce D."/>
            <person name="Goodwin L."/>
            <person name="Pitluck S."/>
            <person name="Sims D."/>
            <person name="Brettin T."/>
            <person name="Detter J.C."/>
            <person name="Han C."/>
            <person name="Kuske C.R."/>
            <person name="Larimer F."/>
            <person name="Land M."/>
            <person name="Hauser L."/>
            <person name="Kyrpides N."/>
            <person name="Lykidis A."/>
            <person name="Borole A.P."/>
        </authorList>
    </citation>
    <scope>NUCLEOTIDE SEQUENCE [LARGE SCALE GENOMIC DNA]</scope>
    <source>
        <strain>ATCC 53993 / BNL-5-31</strain>
    </source>
</reference>
<dbReference type="EMBL" id="CP001132">
    <property type="protein sequence ID" value="ACH84641.1"/>
    <property type="molecule type" value="Genomic_DNA"/>
</dbReference>
<dbReference type="RefSeq" id="WP_009562431.1">
    <property type="nucleotide sequence ID" value="NC_011206.1"/>
</dbReference>
<dbReference type="SMR" id="B5EPA0"/>
<dbReference type="GeneID" id="65281853"/>
<dbReference type="KEGG" id="afe:Lferr_2446"/>
<dbReference type="eggNOG" id="COG0360">
    <property type="taxonomic scope" value="Bacteria"/>
</dbReference>
<dbReference type="HOGENOM" id="CLU_113441_6_0_6"/>
<dbReference type="GO" id="GO:0022627">
    <property type="term" value="C:cytosolic small ribosomal subunit"/>
    <property type="evidence" value="ECO:0007669"/>
    <property type="project" value="TreeGrafter"/>
</dbReference>
<dbReference type="GO" id="GO:0070181">
    <property type="term" value="F:small ribosomal subunit rRNA binding"/>
    <property type="evidence" value="ECO:0007669"/>
    <property type="project" value="TreeGrafter"/>
</dbReference>
<dbReference type="GO" id="GO:0003735">
    <property type="term" value="F:structural constituent of ribosome"/>
    <property type="evidence" value="ECO:0007669"/>
    <property type="project" value="InterPro"/>
</dbReference>
<dbReference type="GO" id="GO:0006412">
    <property type="term" value="P:translation"/>
    <property type="evidence" value="ECO:0007669"/>
    <property type="project" value="UniProtKB-UniRule"/>
</dbReference>
<dbReference type="CDD" id="cd00473">
    <property type="entry name" value="bS6"/>
    <property type="match status" value="1"/>
</dbReference>
<dbReference type="Gene3D" id="3.30.70.60">
    <property type="match status" value="1"/>
</dbReference>
<dbReference type="HAMAP" id="MF_00360">
    <property type="entry name" value="Ribosomal_bS6"/>
    <property type="match status" value="1"/>
</dbReference>
<dbReference type="InterPro" id="IPR000529">
    <property type="entry name" value="Ribosomal_bS6"/>
</dbReference>
<dbReference type="InterPro" id="IPR020815">
    <property type="entry name" value="Ribosomal_bS6_CS"/>
</dbReference>
<dbReference type="InterPro" id="IPR035980">
    <property type="entry name" value="Ribosomal_bS6_sf"/>
</dbReference>
<dbReference type="InterPro" id="IPR020814">
    <property type="entry name" value="Ribosomal_S6_plastid/chlpt"/>
</dbReference>
<dbReference type="InterPro" id="IPR014717">
    <property type="entry name" value="Transl_elong_EF1B/ribsomal_bS6"/>
</dbReference>
<dbReference type="NCBIfam" id="TIGR00166">
    <property type="entry name" value="S6"/>
    <property type="match status" value="1"/>
</dbReference>
<dbReference type="PANTHER" id="PTHR21011">
    <property type="entry name" value="MITOCHONDRIAL 28S RIBOSOMAL PROTEIN S6"/>
    <property type="match status" value="1"/>
</dbReference>
<dbReference type="PANTHER" id="PTHR21011:SF1">
    <property type="entry name" value="SMALL RIBOSOMAL SUBUNIT PROTEIN BS6M"/>
    <property type="match status" value="1"/>
</dbReference>
<dbReference type="Pfam" id="PF01250">
    <property type="entry name" value="Ribosomal_S6"/>
    <property type="match status" value="1"/>
</dbReference>
<dbReference type="SUPFAM" id="SSF54995">
    <property type="entry name" value="Ribosomal protein S6"/>
    <property type="match status" value="1"/>
</dbReference>
<dbReference type="PROSITE" id="PS01048">
    <property type="entry name" value="RIBOSOMAL_S6"/>
    <property type="match status" value="1"/>
</dbReference>
<comment type="function">
    <text evidence="1">Binds together with bS18 to 16S ribosomal RNA.</text>
</comment>
<comment type="similarity">
    <text evidence="1">Belongs to the bacterial ribosomal protein bS6 family.</text>
</comment>
<feature type="chain" id="PRO_1000120697" description="Small ribosomal subunit protein bS6">
    <location>
        <begin position="1"/>
        <end position="134"/>
    </location>
</feature>
<feature type="region of interest" description="Disordered" evidence="2">
    <location>
        <begin position="100"/>
        <end position="134"/>
    </location>
</feature>
<feature type="compositionally biased region" description="Basic and acidic residues" evidence="2">
    <location>
        <begin position="103"/>
        <end position="115"/>
    </location>
</feature>
<name>RS6_ACIF5</name>
<keyword id="KW-0687">Ribonucleoprotein</keyword>
<keyword id="KW-0689">Ribosomal protein</keyword>
<keyword id="KW-0694">RNA-binding</keyword>
<keyword id="KW-0699">rRNA-binding</keyword>
<evidence type="ECO:0000255" key="1">
    <source>
        <dbReference type="HAMAP-Rule" id="MF_00360"/>
    </source>
</evidence>
<evidence type="ECO:0000256" key="2">
    <source>
        <dbReference type="SAM" id="MobiDB-lite"/>
    </source>
</evidence>
<evidence type="ECO:0000305" key="3"/>
<proteinExistence type="inferred from homology"/>
<protein>
    <recommendedName>
        <fullName evidence="1">Small ribosomal subunit protein bS6</fullName>
    </recommendedName>
    <alternativeName>
        <fullName evidence="3">30S ribosomal protein S6</fullName>
    </alternativeName>
</protein>